<evidence type="ECO:0000255" key="1">
    <source>
        <dbReference type="HAMAP-Rule" id="MF_03122"/>
    </source>
</evidence>
<evidence type="ECO:0000269" key="2">
    <source>
    </source>
</evidence>
<evidence type="ECO:0000269" key="3">
    <source>
    </source>
</evidence>
<evidence type="ECO:0000303" key="4">
    <source>
    </source>
</evidence>
<evidence type="ECO:0000305" key="5"/>
<evidence type="ECO:0000305" key="6">
    <source>
    </source>
</evidence>
<evidence type="ECO:0000305" key="7">
    <source>
    </source>
</evidence>
<evidence type="ECO:0007744" key="8">
    <source>
        <dbReference type="PDB" id="3J7A"/>
    </source>
</evidence>
<evidence type="ECO:0007744" key="9">
    <source>
        <dbReference type="PDB" id="3JBN"/>
    </source>
</evidence>
<evidence type="ECO:0007744" key="10">
    <source>
        <dbReference type="PDB" id="3JBO"/>
    </source>
</evidence>
<evidence type="ECO:0007744" key="11">
    <source>
        <dbReference type="PDB" id="3JBP"/>
    </source>
</evidence>
<evidence type="ECO:0007744" key="12">
    <source>
        <dbReference type="PDB" id="6OKK"/>
    </source>
</evidence>
<evidence type="ECO:0007829" key="13">
    <source>
        <dbReference type="PDB" id="3J7A"/>
    </source>
</evidence>
<reference key="1">
    <citation type="journal article" date="1999" name="Nature">
        <title>The complete nucleotide sequence of chromosome 3 of Plasmodium falciparum.</title>
        <authorList>
            <person name="Bowman S."/>
            <person name="Lawson D."/>
            <person name="Basham D."/>
            <person name="Brown D."/>
            <person name="Chillingworth T."/>
            <person name="Churcher C.M."/>
            <person name="Craig A."/>
            <person name="Davies R.M."/>
            <person name="Devlin K."/>
            <person name="Feltwell T."/>
            <person name="Gentles S."/>
            <person name="Gwilliam R."/>
            <person name="Hamlin N."/>
            <person name="Harris D."/>
            <person name="Holroyd S."/>
            <person name="Hornsby T."/>
            <person name="Horrocks P."/>
            <person name="Jagels K."/>
            <person name="Jassal B."/>
            <person name="Kyes S."/>
            <person name="McLean J."/>
            <person name="Moule S."/>
            <person name="Mungall K.L."/>
            <person name="Murphy L."/>
            <person name="Oliver K."/>
            <person name="Quail M.A."/>
            <person name="Rajandream M.A."/>
            <person name="Rutter S."/>
            <person name="Skelton J."/>
            <person name="Squares R."/>
            <person name="Squares S."/>
            <person name="Sulston J.E."/>
            <person name="Whitehead S."/>
            <person name="Woodward J.R."/>
            <person name="Newbold C."/>
            <person name="Barrell B.G."/>
        </authorList>
    </citation>
    <scope>NUCLEOTIDE SEQUENCE [LARGE SCALE GENOMIC DNA]</scope>
    <source>
        <strain>3D7</strain>
    </source>
</reference>
<reference key="2">
    <citation type="journal article" date="2002" name="Nature">
        <title>Genome sequence of the human malaria parasite Plasmodium falciparum.</title>
        <authorList>
            <person name="Gardner M.J."/>
            <person name="Hall N."/>
            <person name="Fung E."/>
            <person name="White O."/>
            <person name="Berriman M."/>
            <person name="Hyman R.W."/>
            <person name="Carlton J.M."/>
            <person name="Pain A."/>
            <person name="Nelson K.E."/>
            <person name="Bowman S."/>
            <person name="Paulsen I.T."/>
            <person name="James K.D."/>
            <person name="Eisen J.A."/>
            <person name="Rutherford K.M."/>
            <person name="Salzberg S.L."/>
            <person name="Craig A."/>
            <person name="Kyes S."/>
            <person name="Chan M.-S."/>
            <person name="Nene V."/>
            <person name="Shallom S.J."/>
            <person name="Suh B."/>
            <person name="Peterson J."/>
            <person name="Angiuoli S."/>
            <person name="Pertea M."/>
            <person name="Allen J."/>
            <person name="Selengut J."/>
            <person name="Haft D."/>
            <person name="Mather M.W."/>
            <person name="Vaidya A.B."/>
            <person name="Martin D.M.A."/>
            <person name="Fairlamb A.H."/>
            <person name="Fraunholz M.J."/>
            <person name="Roos D.S."/>
            <person name="Ralph S.A."/>
            <person name="McFadden G.I."/>
            <person name="Cummings L.M."/>
            <person name="Subramanian G.M."/>
            <person name="Mungall C."/>
            <person name="Venter J.C."/>
            <person name="Carucci D.J."/>
            <person name="Hoffman S.L."/>
            <person name="Newbold C."/>
            <person name="Davis R.W."/>
            <person name="Fraser C.M."/>
            <person name="Barrell B.G."/>
        </authorList>
    </citation>
    <scope>NUCLEOTIDE SEQUENCE [LARGE SCALE GENOMIC DNA]</scope>
    <source>
        <strain>3D7</strain>
    </source>
</reference>
<reference key="3">
    <citation type="journal article" date="2002" name="Nature">
        <title>Sequence of Plasmodium falciparum chromosomes 1, 3-9 and 13.</title>
        <authorList>
            <person name="Hall N."/>
            <person name="Pain A."/>
            <person name="Berriman M."/>
            <person name="Churcher C.M."/>
            <person name="Harris B."/>
            <person name="Harris D."/>
            <person name="Mungall K.L."/>
            <person name="Bowman S."/>
            <person name="Atkin R."/>
            <person name="Baker S."/>
            <person name="Barron A."/>
            <person name="Brooks K."/>
            <person name="Buckee C.O."/>
            <person name="Burrows C."/>
            <person name="Cherevach I."/>
            <person name="Chillingworth C."/>
            <person name="Chillingworth T."/>
            <person name="Christodoulou Z."/>
            <person name="Clark L."/>
            <person name="Clark R."/>
            <person name="Corton C."/>
            <person name="Cronin A."/>
            <person name="Davies R.M."/>
            <person name="Davis P."/>
            <person name="Dear P."/>
            <person name="Dearden F."/>
            <person name="Doggett J."/>
            <person name="Feltwell T."/>
            <person name="Goble A."/>
            <person name="Goodhead I."/>
            <person name="Gwilliam R."/>
            <person name="Hamlin N."/>
            <person name="Hance Z."/>
            <person name="Harper D."/>
            <person name="Hauser H."/>
            <person name="Hornsby T."/>
            <person name="Holroyd S."/>
            <person name="Horrocks P."/>
            <person name="Humphray S."/>
            <person name="Jagels K."/>
            <person name="James K.D."/>
            <person name="Johnson D."/>
            <person name="Kerhornou A."/>
            <person name="Knights A."/>
            <person name="Konfortov B."/>
            <person name="Kyes S."/>
            <person name="Larke N."/>
            <person name="Lawson D."/>
            <person name="Lennard N."/>
            <person name="Line A."/>
            <person name="Maddison M."/>
            <person name="Mclean J."/>
            <person name="Mooney P."/>
            <person name="Moule S."/>
            <person name="Murphy L."/>
            <person name="Oliver K."/>
            <person name="Ormond D."/>
            <person name="Price C."/>
            <person name="Quail M.A."/>
            <person name="Rabbinowitsch E."/>
            <person name="Rajandream M.A."/>
            <person name="Rutter S."/>
            <person name="Rutherford K.M."/>
            <person name="Sanders M."/>
            <person name="Simmonds M."/>
            <person name="Seeger K."/>
            <person name="Sharp S."/>
            <person name="Smith R."/>
            <person name="Squares R."/>
            <person name="Squares S."/>
            <person name="Stevens K."/>
            <person name="Taylor K."/>
            <person name="Tivey A."/>
            <person name="Unwin L."/>
            <person name="Whitehead S."/>
            <person name="Woodward J.R."/>
            <person name="Sulston J.E."/>
            <person name="Craig A."/>
            <person name="Newbold C."/>
            <person name="Barrell B.G."/>
        </authorList>
    </citation>
    <scope>NUCLEOTIDE SEQUENCE [LARGE SCALE GENOMIC DNA]</scope>
    <source>
        <strain>3D7</strain>
    </source>
</reference>
<reference evidence="8 12" key="4">
    <citation type="journal article" date="2014" name="Elife">
        <title>Cryo-EM structure of the Plasmodium falciparum 80S ribosome bound to the anti-protozoan drug emetine.</title>
        <authorList>
            <person name="Wong W."/>
            <person name="Bai X.C."/>
            <person name="Brown A."/>
            <person name="Fernandez I.S."/>
            <person name="Hanssen E."/>
            <person name="Condron M."/>
            <person name="Tan Y.H."/>
            <person name="Baum J."/>
            <person name="Scheres S.H."/>
        </authorList>
    </citation>
    <scope>STRUCTURE BY ELECTRON MICROSCOPY (3.20 ANGSTROMS) IN COMPLEX WITH RIBOSOMAL PROTEINS; RRNA AND MEFLOQUINE INHIBITOR</scope>
    <scope>FUNCTION</scope>
    <scope>SUBCELLULAR LOCATION</scope>
    <scope>DEVELOPMENTAL STAGE</scope>
</reference>
<reference evidence="9 10 11" key="5">
    <citation type="journal article" date="2015" name="Nucleic Acids Res.">
        <title>Dynamical features of the Plasmodium falciparum ribosome during translation.</title>
        <authorList>
            <person name="Sun M."/>
            <person name="Li W."/>
            <person name="Blomqvist K."/>
            <person name="Das S."/>
            <person name="Hashem Y."/>
            <person name="Dvorin J.D."/>
            <person name="Frank J."/>
        </authorList>
    </citation>
    <scope>STRUCTURE BY ELECTRON MICROSCOPY (4.70 ANGSTROMS) OF 24-233 IN COMPLEX WITH RIBOSOMAL PROTEINS; RRNA AND TRNA</scope>
    <scope>FUNCTION</scope>
    <scope>DEVELOPMENTAL STAGE</scope>
</reference>
<name>RS3A_PLAF7</name>
<gene>
    <name evidence="5" type="primary">RPS3A</name>
    <name evidence="4" type="synonym">eS1</name>
    <name type="ORF">MAL3P7.35</name>
    <name type="ORF">PF3D7_0322900</name>
    <name type="ORF">PFC1020c</name>
</gene>
<sequence>MAVGKNKRTSKGKKGGKKKVTDVFTKKEWYDLKAPKMFLVRNFGKTLVTKTIGKKLATDSLKGRIYEVNLADLNNDEDQAHKKIKLSCDHIINRDCYTDFCGLSITRDKLCSLIRKGYTLIEGHTDVKTLDNYHLRMFCIAFTKKRQNQTKSTCYAQTSQIKKIRKKMVDIMTAEASKVLLKDLVKKFIPESIGKEIEKQCKKIYPLQNVLIRKVKILKRPKLDISKLMELHTDPKEESGKNVNALPESKEATNILTAELKH</sequence>
<accession>O97313</accession>
<dbReference type="EMBL" id="AL844502">
    <property type="protein sequence ID" value="CAB39062.1"/>
    <property type="molecule type" value="Genomic_DNA"/>
</dbReference>
<dbReference type="RefSeq" id="XP_001351300.1">
    <property type="nucleotide sequence ID" value="XM_001351264.1"/>
</dbReference>
<dbReference type="PDB" id="3J7A">
    <property type="method" value="EM"/>
    <property type="resolution" value="3.20 A"/>
    <property type="chains" value="B=1-262"/>
</dbReference>
<dbReference type="PDB" id="3JBN">
    <property type="method" value="EM"/>
    <property type="resolution" value="4.70 A"/>
    <property type="chains" value="B=24-233"/>
</dbReference>
<dbReference type="PDB" id="3JBO">
    <property type="method" value="EM"/>
    <property type="resolution" value="5.80 A"/>
    <property type="chains" value="B=24-233"/>
</dbReference>
<dbReference type="PDB" id="3JBP">
    <property type="method" value="EM"/>
    <property type="resolution" value="6.70 A"/>
    <property type="chains" value="B=24-233"/>
</dbReference>
<dbReference type="PDB" id="6OKK">
    <property type="method" value="EM"/>
    <property type="resolution" value="3.30 A"/>
    <property type="chains" value="B=1-262"/>
</dbReference>
<dbReference type="PDB" id="8TPU">
    <property type="method" value="EM"/>
    <property type="resolution" value="4.10 A"/>
    <property type="chains" value="SB=1-262"/>
</dbReference>
<dbReference type="PDBsum" id="3J7A"/>
<dbReference type="PDBsum" id="3JBN"/>
<dbReference type="PDBsum" id="3JBO"/>
<dbReference type="PDBsum" id="3JBP"/>
<dbReference type="PDBsum" id="6OKK"/>
<dbReference type="PDBsum" id="8TPU"/>
<dbReference type="EMDB" id="EMD-41485"/>
<dbReference type="SMR" id="O97313"/>
<dbReference type="FunCoup" id="O97313">
    <property type="interactions" value="410"/>
</dbReference>
<dbReference type="IntAct" id="O97313">
    <property type="interactions" value="1"/>
</dbReference>
<dbReference type="STRING" id="36329.O97313"/>
<dbReference type="DrugBank" id="DB11638">
    <property type="generic name" value="Artenimol"/>
</dbReference>
<dbReference type="PaxDb" id="5833-PFC1020c"/>
<dbReference type="EnsemblProtists" id="CAB39062">
    <property type="protein sequence ID" value="CAB39062"/>
    <property type="gene ID" value="PF3D7_0322900"/>
</dbReference>
<dbReference type="GeneID" id="814544"/>
<dbReference type="KEGG" id="pfa:PF3D7_0322900"/>
<dbReference type="VEuPathDB" id="PlasmoDB:PF3D7_0322900"/>
<dbReference type="HOGENOM" id="CLU_062507_0_1_1"/>
<dbReference type="InParanoid" id="O97313"/>
<dbReference type="OMA" id="TRFKGHE"/>
<dbReference type="OrthoDB" id="9834376at2759"/>
<dbReference type="PhylomeDB" id="O97313"/>
<dbReference type="Reactome" id="R-PFA-156827">
    <property type="pathway name" value="L13a-mediated translational silencing of Ceruloplasmin expression"/>
</dbReference>
<dbReference type="Reactome" id="R-PFA-1799339">
    <property type="pathway name" value="SRP-dependent cotranslational protein targeting to membrane"/>
</dbReference>
<dbReference type="Reactome" id="R-PFA-5689880">
    <property type="pathway name" value="Ub-specific processing proteases"/>
</dbReference>
<dbReference type="Reactome" id="R-PFA-72649">
    <property type="pathway name" value="Translation initiation complex formation"/>
</dbReference>
<dbReference type="Reactome" id="R-PFA-72689">
    <property type="pathway name" value="Formation of a pool of free 40S subunits"/>
</dbReference>
<dbReference type="Reactome" id="R-PFA-72695">
    <property type="pathway name" value="Formation of the ternary complex, and subsequently, the 43S complex"/>
</dbReference>
<dbReference type="Reactome" id="R-PFA-72702">
    <property type="pathway name" value="Ribosomal scanning and start codon recognition"/>
</dbReference>
<dbReference type="Reactome" id="R-PFA-72706">
    <property type="pathway name" value="GTP hydrolysis and joining of the 60S ribosomal subunit"/>
</dbReference>
<dbReference type="Reactome" id="R-PFA-936440">
    <property type="pathway name" value="Negative regulators of DDX58/IFIH1 signaling"/>
</dbReference>
<dbReference type="Reactome" id="R-PFA-975956">
    <property type="pathway name" value="Nonsense Mediated Decay (NMD) independent of the Exon Junction Complex (EJC)"/>
</dbReference>
<dbReference type="Reactome" id="R-PFA-975957">
    <property type="pathway name" value="Nonsense Mediated Decay (NMD) enhanced by the Exon Junction Complex (EJC)"/>
</dbReference>
<dbReference type="EvolutionaryTrace" id="O97313"/>
<dbReference type="Proteomes" id="UP000001450">
    <property type="component" value="Chromosome 3"/>
</dbReference>
<dbReference type="GO" id="GO:0005829">
    <property type="term" value="C:cytosol"/>
    <property type="evidence" value="ECO:0000318"/>
    <property type="project" value="GO_Central"/>
</dbReference>
<dbReference type="GO" id="GO:0022627">
    <property type="term" value="C:cytosolic small ribosomal subunit"/>
    <property type="evidence" value="ECO:0000250"/>
    <property type="project" value="GeneDB"/>
</dbReference>
<dbReference type="GO" id="GO:0003735">
    <property type="term" value="F:structural constituent of ribosome"/>
    <property type="evidence" value="ECO:0000250"/>
    <property type="project" value="GeneDB"/>
</dbReference>
<dbReference type="GO" id="GO:0006412">
    <property type="term" value="P:translation"/>
    <property type="evidence" value="ECO:0000250"/>
    <property type="project" value="GeneDB"/>
</dbReference>
<dbReference type="HAMAP" id="MF_03122">
    <property type="entry name" value="Ribosomal_eS1_euk"/>
    <property type="match status" value="1"/>
</dbReference>
<dbReference type="InterPro" id="IPR001593">
    <property type="entry name" value="Ribosomal_eS1"/>
</dbReference>
<dbReference type="InterPro" id="IPR027500">
    <property type="entry name" value="Ribosomal_eS1_euk"/>
</dbReference>
<dbReference type="PANTHER" id="PTHR11830">
    <property type="entry name" value="40S RIBOSOMAL PROTEIN S3A"/>
    <property type="match status" value="1"/>
</dbReference>
<dbReference type="Pfam" id="PF01015">
    <property type="entry name" value="Ribosomal_S3Ae"/>
    <property type="match status" value="1"/>
</dbReference>
<dbReference type="SMART" id="SM01397">
    <property type="entry name" value="Ribosomal_S3Ae"/>
    <property type="match status" value="1"/>
</dbReference>
<organism>
    <name type="scientific">Plasmodium falciparum (isolate 3D7)</name>
    <dbReference type="NCBI Taxonomy" id="36329"/>
    <lineage>
        <taxon>Eukaryota</taxon>
        <taxon>Sar</taxon>
        <taxon>Alveolata</taxon>
        <taxon>Apicomplexa</taxon>
        <taxon>Aconoidasida</taxon>
        <taxon>Haemosporida</taxon>
        <taxon>Plasmodiidae</taxon>
        <taxon>Plasmodium</taxon>
        <taxon>Plasmodium (Laverania)</taxon>
    </lineage>
</organism>
<protein>
    <recommendedName>
        <fullName evidence="1">Small ribosomal subunit protein eS1</fullName>
    </recommendedName>
    <alternativeName>
        <fullName evidence="5">40S ribosomal protein S3a</fullName>
    </alternativeName>
</protein>
<feature type="initiator methionine" description="Removed" evidence="1">
    <location>
        <position position="1"/>
    </location>
</feature>
<feature type="chain" id="PRO_0000389336" description="Small ribosomal subunit protein eS1">
    <location>
        <begin position="2"/>
        <end position="262"/>
    </location>
</feature>
<feature type="strand" evidence="13">
    <location>
        <begin position="28"/>
        <end position="33"/>
    </location>
</feature>
<feature type="strand" evidence="13">
    <location>
        <begin position="42"/>
        <end position="48"/>
    </location>
</feature>
<feature type="helix" evidence="13">
    <location>
        <begin position="58"/>
        <end position="61"/>
    </location>
</feature>
<feature type="strand" evidence="13">
    <location>
        <begin position="65"/>
        <end position="67"/>
    </location>
</feature>
<feature type="helix" evidence="13">
    <location>
        <begin position="71"/>
        <end position="74"/>
    </location>
</feature>
<feature type="helix" evidence="13">
    <location>
        <begin position="77"/>
        <end position="79"/>
    </location>
</feature>
<feature type="strand" evidence="13">
    <location>
        <begin position="85"/>
        <end position="87"/>
    </location>
</feature>
<feature type="strand" evidence="13">
    <location>
        <begin position="99"/>
        <end position="103"/>
    </location>
</feature>
<feature type="helix" evidence="13">
    <location>
        <begin position="107"/>
        <end position="113"/>
    </location>
</feature>
<feature type="strand" evidence="13">
    <location>
        <begin position="116"/>
        <end position="118"/>
    </location>
</feature>
<feature type="strand" evidence="13">
    <location>
        <begin position="126"/>
        <end position="128"/>
    </location>
</feature>
<feature type="strand" evidence="13">
    <location>
        <begin position="134"/>
        <end position="136"/>
    </location>
</feature>
<feature type="helix" evidence="13">
    <location>
        <begin position="147"/>
        <end position="149"/>
    </location>
</feature>
<feature type="helix" evidence="13">
    <location>
        <begin position="158"/>
        <end position="178"/>
    </location>
</feature>
<feature type="helix" evidence="13">
    <location>
        <begin position="181"/>
        <end position="188"/>
    </location>
</feature>
<feature type="turn" evidence="13">
    <location>
        <begin position="189"/>
        <end position="191"/>
    </location>
</feature>
<feature type="helix" evidence="13">
    <location>
        <begin position="192"/>
        <end position="201"/>
    </location>
</feature>
<feature type="turn" evidence="13">
    <location>
        <begin position="202"/>
        <end position="204"/>
    </location>
</feature>
<feature type="strand" evidence="13">
    <location>
        <begin position="215"/>
        <end position="219"/>
    </location>
</feature>
<feature type="helix" evidence="13">
    <location>
        <begin position="225"/>
        <end position="232"/>
    </location>
</feature>
<proteinExistence type="evidence at protein level"/>
<comment type="function">
    <text evidence="6 7">Component of the ribosome, a large ribonucleoprotein complex responsible for the synthesis of proteins in the cell (Probable). The small ribosomal subunit (SSU) binds messenger RNAs (mRNAs) and translates the encoded message by selecting cognate aminoacyl-transfer RNA (tRNA) molecules (Probable). The large subunit (LSU) contains the ribosomal catalytic site termed the peptidyl transferase center (PTC), which catalyzes the formation of peptide bonds, thereby polymerizing the amino acids delivered by tRNAs into a polypeptide chain (Probable). The nascent polypeptides leave the ribosome through a tunnel in the LSU and interact with protein factors that function in enzymatic processing, targeting, and the membrane insertion of nascent chains at the exit of the ribosomal tunnel (Probable).</text>
</comment>
<comment type="subunit">
    <text evidence="2 3">Component of the small ribosomal subunit (PubMed:24913268, PubMed:26432834). Mature ribosomes consist of a small (40S) and a large (60S) subunit (PubMed:24913268, PubMed:26432834). The 40S subunit contains about 32 different proteins and 1 molecule of RNA (18S). The 60S subunit contains about 42 different proteins and 3 molecules of RNA (28S, 5.8S and 5S) (PubMed:24913268, PubMed:26432834).</text>
</comment>
<comment type="subcellular location">
    <subcellularLocation>
        <location evidence="1 2">Cytoplasm</location>
    </subcellularLocation>
</comment>
<comment type="developmental stage">
    <text evidence="2 3">Expressed during the asexual blood stage (at protein level).</text>
</comment>
<comment type="similarity">
    <text evidence="1">Belongs to the eukaryotic ribosomal protein eS1 family.</text>
</comment>
<keyword id="KW-0002">3D-structure</keyword>
<keyword id="KW-0963">Cytoplasm</keyword>
<keyword id="KW-1185">Reference proteome</keyword>
<keyword id="KW-0687">Ribonucleoprotein</keyword>
<keyword id="KW-0689">Ribosomal protein</keyword>